<accession>C0MCC4</accession>
<keyword id="KW-0687">Ribonucleoprotein</keyword>
<keyword id="KW-0689">Ribosomal protein</keyword>
<keyword id="KW-0694">RNA-binding</keyword>
<keyword id="KW-0699">rRNA-binding</keyword>
<organism>
    <name type="scientific">Streptococcus equi subsp. zooepidemicus (strain H70)</name>
    <dbReference type="NCBI Taxonomy" id="553483"/>
    <lineage>
        <taxon>Bacteria</taxon>
        <taxon>Bacillati</taxon>
        <taxon>Bacillota</taxon>
        <taxon>Bacilli</taxon>
        <taxon>Lactobacillales</taxon>
        <taxon>Streptococcaceae</taxon>
        <taxon>Streptococcus</taxon>
    </lineage>
</organism>
<protein>
    <recommendedName>
        <fullName evidence="1">Small ribosomal subunit protein uS8</fullName>
    </recommendedName>
    <alternativeName>
        <fullName evidence="2">30S ribosomal protein S8</fullName>
    </alternativeName>
</protein>
<gene>
    <name evidence="1" type="primary">rpsH</name>
    <name type="ordered locus">SZO_00640</name>
</gene>
<proteinExistence type="inferred from homology"/>
<evidence type="ECO:0000255" key="1">
    <source>
        <dbReference type="HAMAP-Rule" id="MF_01302"/>
    </source>
</evidence>
<evidence type="ECO:0000305" key="2"/>
<name>RS8_STRS7</name>
<feature type="chain" id="PRO_1000214265" description="Small ribosomal subunit protein uS8">
    <location>
        <begin position="1"/>
        <end position="132"/>
    </location>
</feature>
<sequence>MVMTDPIADFLTRIRNANQVKHEVLEVPASNIKKGIAEILKREGFIKNVEVIEDGKQGIIRVFLKYGQNGERVITNLKRVSKPGLRIYSKREDVPKVLNGLGIAIISTSEGLLTDKEARQKNVGGEVIAYVW</sequence>
<reference key="1">
    <citation type="journal article" date="2009" name="PLoS Pathog.">
        <title>Genomic evidence for the evolution of Streptococcus equi: host restriction, increased virulence, and genetic exchange with human pathogens.</title>
        <authorList>
            <person name="Holden M.T.G."/>
            <person name="Heather Z."/>
            <person name="Paillot R."/>
            <person name="Steward K.F."/>
            <person name="Webb K."/>
            <person name="Ainslie F."/>
            <person name="Jourdan T."/>
            <person name="Bason N.C."/>
            <person name="Holroyd N.E."/>
            <person name="Mungall K."/>
            <person name="Quail M.A."/>
            <person name="Sanders M."/>
            <person name="Simmonds M."/>
            <person name="Willey D."/>
            <person name="Brooks K."/>
            <person name="Aanensen D.M."/>
            <person name="Spratt B.G."/>
            <person name="Jolley K.A."/>
            <person name="Maiden M.C.J."/>
            <person name="Kehoe M."/>
            <person name="Chanter N."/>
            <person name="Bentley S.D."/>
            <person name="Robinson C."/>
            <person name="Maskell D.J."/>
            <person name="Parkhill J."/>
            <person name="Waller A.S."/>
        </authorList>
    </citation>
    <scope>NUCLEOTIDE SEQUENCE [LARGE SCALE GENOMIC DNA]</scope>
    <source>
        <strain>H70</strain>
    </source>
</reference>
<comment type="function">
    <text evidence="1">One of the primary rRNA binding proteins, it binds directly to 16S rRNA central domain where it helps coordinate assembly of the platform of the 30S subunit.</text>
</comment>
<comment type="subunit">
    <text evidence="1">Part of the 30S ribosomal subunit. Contacts proteins S5 and S12.</text>
</comment>
<comment type="similarity">
    <text evidence="1">Belongs to the universal ribosomal protein uS8 family.</text>
</comment>
<dbReference type="EMBL" id="FM204884">
    <property type="protein sequence ID" value="CAW97668.1"/>
    <property type="molecule type" value="Genomic_DNA"/>
</dbReference>
<dbReference type="SMR" id="C0MCC4"/>
<dbReference type="KEGG" id="seq:SZO_00640"/>
<dbReference type="eggNOG" id="COG0096">
    <property type="taxonomic scope" value="Bacteria"/>
</dbReference>
<dbReference type="HOGENOM" id="CLU_098428_0_2_9"/>
<dbReference type="Proteomes" id="UP000001368">
    <property type="component" value="Chromosome"/>
</dbReference>
<dbReference type="GO" id="GO:1990904">
    <property type="term" value="C:ribonucleoprotein complex"/>
    <property type="evidence" value="ECO:0007669"/>
    <property type="project" value="UniProtKB-KW"/>
</dbReference>
<dbReference type="GO" id="GO:0005840">
    <property type="term" value="C:ribosome"/>
    <property type="evidence" value="ECO:0007669"/>
    <property type="project" value="UniProtKB-KW"/>
</dbReference>
<dbReference type="GO" id="GO:0019843">
    <property type="term" value="F:rRNA binding"/>
    <property type="evidence" value="ECO:0007669"/>
    <property type="project" value="UniProtKB-UniRule"/>
</dbReference>
<dbReference type="GO" id="GO:0003735">
    <property type="term" value="F:structural constituent of ribosome"/>
    <property type="evidence" value="ECO:0007669"/>
    <property type="project" value="InterPro"/>
</dbReference>
<dbReference type="GO" id="GO:0006412">
    <property type="term" value="P:translation"/>
    <property type="evidence" value="ECO:0007669"/>
    <property type="project" value="UniProtKB-UniRule"/>
</dbReference>
<dbReference type="FunFam" id="3.30.1370.30:FF:000002">
    <property type="entry name" value="30S ribosomal protein S8"/>
    <property type="match status" value="1"/>
</dbReference>
<dbReference type="FunFam" id="3.30.1490.10:FF:000001">
    <property type="entry name" value="30S ribosomal protein S8"/>
    <property type="match status" value="1"/>
</dbReference>
<dbReference type="Gene3D" id="3.30.1370.30">
    <property type="match status" value="1"/>
</dbReference>
<dbReference type="Gene3D" id="3.30.1490.10">
    <property type="match status" value="1"/>
</dbReference>
<dbReference type="HAMAP" id="MF_01302_B">
    <property type="entry name" value="Ribosomal_uS8_B"/>
    <property type="match status" value="1"/>
</dbReference>
<dbReference type="InterPro" id="IPR000630">
    <property type="entry name" value="Ribosomal_uS8"/>
</dbReference>
<dbReference type="InterPro" id="IPR047863">
    <property type="entry name" value="Ribosomal_uS8_CS"/>
</dbReference>
<dbReference type="InterPro" id="IPR035987">
    <property type="entry name" value="Ribosomal_uS8_sf"/>
</dbReference>
<dbReference type="NCBIfam" id="NF001109">
    <property type="entry name" value="PRK00136.1"/>
    <property type="match status" value="1"/>
</dbReference>
<dbReference type="PANTHER" id="PTHR11758">
    <property type="entry name" value="40S RIBOSOMAL PROTEIN S15A"/>
    <property type="match status" value="1"/>
</dbReference>
<dbReference type="Pfam" id="PF00410">
    <property type="entry name" value="Ribosomal_S8"/>
    <property type="match status" value="1"/>
</dbReference>
<dbReference type="SUPFAM" id="SSF56047">
    <property type="entry name" value="Ribosomal protein S8"/>
    <property type="match status" value="1"/>
</dbReference>
<dbReference type="PROSITE" id="PS00053">
    <property type="entry name" value="RIBOSOMAL_S8"/>
    <property type="match status" value="1"/>
</dbReference>